<proteinExistence type="inferred from homology"/>
<dbReference type="EC" id="3.1.13.1" evidence="2"/>
<dbReference type="EMBL" id="CP000800">
    <property type="protein sequence ID" value="ABV20848.1"/>
    <property type="molecule type" value="Genomic_DNA"/>
</dbReference>
<dbReference type="RefSeq" id="WP_000484984.1">
    <property type="nucleotide sequence ID" value="NC_009801.1"/>
</dbReference>
<dbReference type="SMR" id="A7ZLA9"/>
<dbReference type="KEGG" id="ecw:EcE24377A_1491"/>
<dbReference type="HOGENOM" id="CLU_002333_7_3_6"/>
<dbReference type="Proteomes" id="UP000001122">
    <property type="component" value="Chromosome"/>
</dbReference>
<dbReference type="GO" id="GO:0005829">
    <property type="term" value="C:cytosol"/>
    <property type="evidence" value="ECO:0007669"/>
    <property type="project" value="TreeGrafter"/>
</dbReference>
<dbReference type="GO" id="GO:0008859">
    <property type="term" value="F:exoribonuclease II activity"/>
    <property type="evidence" value="ECO:0007669"/>
    <property type="project" value="UniProtKB-UniRule"/>
</dbReference>
<dbReference type="GO" id="GO:0003723">
    <property type="term" value="F:RNA binding"/>
    <property type="evidence" value="ECO:0007669"/>
    <property type="project" value="UniProtKB-KW"/>
</dbReference>
<dbReference type="GO" id="GO:0006402">
    <property type="term" value="P:mRNA catabolic process"/>
    <property type="evidence" value="ECO:0007669"/>
    <property type="project" value="UniProtKB-UniRule"/>
</dbReference>
<dbReference type="FunFam" id="2.40.50.140:FF:000079">
    <property type="entry name" value="Exoribonuclease 2"/>
    <property type="match status" value="1"/>
</dbReference>
<dbReference type="FunFam" id="2.40.50.140:FF:000081">
    <property type="entry name" value="Exoribonuclease 2"/>
    <property type="match status" value="1"/>
</dbReference>
<dbReference type="FunFam" id="2.40.50.640:FF:000001">
    <property type="entry name" value="Exoribonuclease 2"/>
    <property type="match status" value="1"/>
</dbReference>
<dbReference type="Gene3D" id="2.40.50.640">
    <property type="match status" value="1"/>
</dbReference>
<dbReference type="Gene3D" id="2.40.50.140">
    <property type="entry name" value="Nucleic acid-binding proteins"/>
    <property type="match status" value="2"/>
</dbReference>
<dbReference type="HAMAP" id="MF_01036">
    <property type="entry name" value="RNase_II"/>
    <property type="match status" value="1"/>
</dbReference>
<dbReference type="InterPro" id="IPR011129">
    <property type="entry name" value="CSD"/>
</dbReference>
<dbReference type="InterPro" id="IPR012340">
    <property type="entry name" value="NA-bd_OB-fold"/>
</dbReference>
<dbReference type="InterPro" id="IPR013223">
    <property type="entry name" value="RNase_B_OB_dom"/>
</dbReference>
<dbReference type="InterPro" id="IPR011804">
    <property type="entry name" value="RNase_II"/>
</dbReference>
<dbReference type="InterPro" id="IPR001900">
    <property type="entry name" value="RNase_II/R"/>
</dbReference>
<dbReference type="InterPro" id="IPR022966">
    <property type="entry name" value="RNase_II/R_CS"/>
</dbReference>
<dbReference type="InterPro" id="IPR004476">
    <property type="entry name" value="RNase_II/RNase_R"/>
</dbReference>
<dbReference type="InterPro" id="IPR050180">
    <property type="entry name" value="RNR_Ribonuclease"/>
</dbReference>
<dbReference type="InterPro" id="IPR003029">
    <property type="entry name" value="S1_domain"/>
</dbReference>
<dbReference type="NCBIfam" id="TIGR00358">
    <property type="entry name" value="3_prime_RNase"/>
    <property type="match status" value="1"/>
</dbReference>
<dbReference type="NCBIfam" id="NF003455">
    <property type="entry name" value="PRK05054.1"/>
    <property type="match status" value="1"/>
</dbReference>
<dbReference type="NCBIfam" id="TIGR02062">
    <property type="entry name" value="RNase_B"/>
    <property type="match status" value="1"/>
</dbReference>
<dbReference type="PANTHER" id="PTHR23355:SF37">
    <property type="entry name" value="EXORIBONUCLEASE 2"/>
    <property type="match status" value="1"/>
</dbReference>
<dbReference type="PANTHER" id="PTHR23355">
    <property type="entry name" value="RIBONUCLEASE"/>
    <property type="match status" value="1"/>
</dbReference>
<dbReference type="Pfam" id="PF08206">
    <property type="entry name" value="OB_RNB"/>
    <property type="match status" value="1"/>
</dbReference>
<dbReference type="Pfam" id="PF00773">
    <property type="entry name" value="RNB"/>
    <property type="match status" value="1"/>
</dbReference>
<dbReference type="Pfam" id="PF00575">
    <property type="entry name" value="S1"/>
    <property type="match status" value="1"/>
</dbReference>
<dbReference type="SMART" id="SM00357">
    <property type="entry name" value="CSP"/>
    <property type="match status" value="1"/>
</dbReference>
<dbReference type="SMART" id="SM00955">
    <property type="entry name" value="RNB"/>
    <property type="match status" value="1"/>
</dbReference>
<dbReference type="SUPFAM" id="SSF50249">
    <property type="entry name" value="Nucleic acid-binding proteins"/>
    <property type="match status" value="4"/>
</dbReference>
<dbReference type="PROSITE" id="PS01175">
    <property type="entry name" value="RIBONUCLEASE_II"/>
    <property type="match status" value="1"/>
</dbReference>
<protein>
    <recommendedName>
        <fullName evidence="2">Exoribonuclease 2</fullName>
        <ecNumber evidence="2">3.1.13.1</ecNumber>
    </recommendedName>
    <alternativeName>
        <fullName evidence="2">Exoribonuclease II</fullName>
        <shortName evidence="2">RNase II</shortName>
        <shortName evidence="2">Ribonuclease II</shortName>
    </alternativeName>
</protein>
<organism>
    <name type="scientific">Escherichia coli O139:H28 (strain E24377A / ETEC)</name>
    <dbReference type="NCBI Taxonomy" id="331111"/>
    <lineage>
        <taxon>Bacteria</taxon>
        <taxon>Pseudomonadati</taxon>
        <taxon>Pseudomonadota</taxon>
        <taxon>Gammaproteobacteria</taxon>
        <taxon>Enterobacterales</taxon>
        <taxon>Enterobacteriaceae</taxon>
        <taxon>Escherichia</taxon>
    </lineage>
</organism>
<evidence type="ECO:0000255" key="1"/>
<evidence type="ECO:0000255" key="2">
    <source>
        <dbReference type="HAMAP-Rule" id="MF_01036"/>
    </source>
</evidence>
<name>RNB_ECO24</name>
<accession>A7ZLA9</accession>
<sequence length="644" mass="72491">MFQDNPLLAQLKQQLHSQTPRAEGVVKATEKGFGFLEVDAQKSYFIPPPQMKKVMHGDRIIAVIHSEKERESAEPEELVEPFLTRFVGKVQGKNDRLAIVPDHPLLKDAIPCRAARGLNHEFKEGDWAVAEMRRHPLKGDRSFYAELTQYITFGDDHFVPWWVTLARHNLEKEAPDGVATEMLDEGLVREDLTALDFVTIDSASTEDMDDALFAKALPDDKLQLIVAIADPTAWIAEGSKLDKAAKIRAFTNYLPGFNIPMLPRELSDDLCSLRANEVRPVLACRMTLSADGTIEDNIEFFAATIESKAKLVYDQVSDWLENTGDWQPESEAIAEQVRLLAQICQRRGEWRHNHALVFKDRPDYRFILGEKGEVLDIVAEPRRIANRIVEEAMIAANICAARVLRDKLGFGIYNVHMGFDPANADALAALLKTHGLHVDAEEVLTLDGFCKLRRELDAQPTGFLDSRIRRFQSFAEISTEPGPHFGLGLEAYATWTSPIRKYGDMINHRLLKAVIKGETATRPQDEITVQMAERRRLNRMAERDVGDWLYARFLKDKAGTDTRFAAEIVDISRGGMRVRLVDNGAIAFIPAPFLHAVRDELVCSQENGTVQIKGETVYKVTDVIDVTIAEVRMETRSIIARPVA</sequence>
<reference key="1">
    <citation type="journal article" date="2008" name="J. Bacteriol.">
        <title>The pangenome structure of Escherichia coli: comparative genomic analysis of E. coli commensal and pathogenic isolates.</title>
        <authorList>
            <person name="Rasko D.A."/>
            <person name="Rosovitz M.J."/>
            <person name="Myers G.S.A."/>
            <person name="Mongodin E.F."/>
            <person name="Fricke W.F."/>
            <person name="Gajer P."/>
            <person name="Crabtree J."/>
            <person name="Sebaihia M."/>
            <person name="Thomson N.R."/>
            <person name="Chaudhuri R."/>
            <person name="Henderson I.R."/>
            <person name="Sperandio V."/>
            <person name="Ravel J."/>
        </authorList>
    </citation>
    <scope>NUCLEOTIDE SEQUENCE [LARGE SCALE GENOMIC DNA]</scope>
    <source>
        <strain>E24377A / ETEC</strain>
    </source>
</reference>
<gene>
    <name evidence="2" type="primary">rnb</name>
    <name type="ordered locus">EcE24377A_1491</name>
</gene>
<comment type="function">
    <text evidence="2">Involved in mRNA degradation. Hydrolyzes single-stranded polyribonucleotides processively in the 3' to 5' direction.</text>
</comment>
<comment type="catalytic activity">
    <reaction evidence="2">
        <text>Exonucleolytic cleavage in the 3'- to 5'-direction to yield nucleoside 5'-phosphates.</text>
        <dbReference type="EC" id="3.1.13.1"/>
    </reaction>
</comment>
<comment type="subcellular location">
    <subcellularLocation>
        <location evidence="2">Cytoplasm</location>
    </subcellularLocation>
</comment>
<comment type="similarity">
    <text evidence="2">Belongs to the RNR ribonuclease family. RNase II subfamily.</text>
</comment>
<keyword id="KW-0963">Cytoplasm</keyword>
<keyword id="KW-0269">Exonuclease</keyword>
<keyword id="KW-0378">Hydrolase</keyword>
<keyword id="KW-0540">Nuclease</keyword>
<keyword id="KW-1185">Reference proteome</keyword>
<keyword id="KW-0694">RNA-binding</keyword>
<feature type="chain" id="PRO_1000063883" description="Exoribonuclease 2">
    <location>
        <begin position="1"/>
        <end position="644"/>
    </location>
</feature>
<feature type="domain" description="RNB" evidence="1">
    <location>
        <begin position="189"/>
        <end position="516"/>
    </location>
</feature>
<feature type="domain" description="S1 motif" evidence="2">
    <location>
        <begin position="561"/>
        <end position="643"/>
    </location>
</feature>